<name>KRI1_DROME</name>
<evidence type="ECO:0000255" key="1"/>
<evidence type="ECO:0000256" key="2">
    <source>
        <dbReference type="SAM" id="MobiDB-lite"/>
    </source>
</evidence>
<evidence type="ECO:0000269" key="3">
    <source>
    </source>
</evidence>
<evidence type="ECO:0000269" key="4">
    <source>
    </source>
</evidence>
<evidence type="ECO:0000305" key="5"/>
<proteinExistence type="evidence at protein level"/>
<organism>
    <name type="scientific">Drosophila melanogaster</name>
    <name type="common">Fruit fly</name>
    <dbReference type="NCBI Taxonomy" id="7227"/>
    <lineage>
        <taxon>Eukaryota</taxon>
        <taxon>Metazoa</taxon>
        <taxon>Ecdysozoa</taxon>
        <taxon>Arthropoda</taxon>
        <taxon>Hexapoda</taxon>
        <taxon>Insecta</taxon>
        <taxon>Pterygota</taxon>
        <taxon>Neoptera</taxon>
        <taxon>Endopterygota</taxon>
        <taxon>Diptera</taxon>
        <taxon>Brachycera</taxon>
        <taxon>Muscomorpha</taxon>
        <taxon>Ephydroidea</taxon>
        <taxon>Drosophilidae</taxon>
        <taxon>Drosophila</taxon>
        <taxon>Sophophora</taxon>
    </lineage>
</organism>
<feature type="chain" id="PRO_0000372654" description="Protein KRI1 homolog">
    <location>
        <begin position="1"/>
        <end position="855"/>
    </location>
</feature>
<feature type="region of interest" description="Disordered" evidence="2">
    <location>
        <begin position="47"/>
        <end position="67"/>
    </location>
</feature>
<feature type="region of interest" description="Disordered" evidence="2">
    <location>
        <begin position="82"/>
        <end position="117"/>
    </location>
</feature>
<feature type="region of interest" description="Disordered" evidence="2">
    <location>
        <begin position="130"/>
        <end position="196"/>
    </location>
</feature>
<feature type="region of interest" description="Disordered" evidence="2">
    <location>
        <begin position="312"/>
        <end position="342"/>
    </location>
</feature>
<feature type="region of interest" description="Disordered" evidence="2">
    <location>
        <begin position="424"/>
        <end position="453"/>
    </location>
</feature>
<feature type="region of interest" description="Disordered" evidence="2">
    <location>
        <begin position="589"/>
        <end position="855"/>
    </location>
</feature>
<feature type="coiled-coil region" evidence="1">
    <location>
        <begin position="307"/>
        <end position="362"/>
    </location>
</feature>
<feature type="compositionally biased region" description="Acidic residues" evidence="2">
    <location>
        <begin position="48"/>
        <end position="64"/>
    </location>
</feature>
<feature type="compositionally biased region" description="Basic and acidic residues" evidence="2">
    <location>
        <begin position="82"/>
        <end position="91"/>
    </location>
</feature>
<feature type="compositionally biased region" description="Basic and acidic residues" evidence="2">
    <location>
        <begin position="160"/>
        <end position="176"/>
    </location>
</feature>
<feature type="compositionally biased region" description="Acidic residues" evidence="2">
    <location>
        <begin position="441"/>
        <end position="452"/>
    </location>
</feature>
<feature type="compositionally biased region" description="Low complexity" evidence="2">
    <location>
        <begin position="609"/>
        <end position="619"/>
    </location>
</feature>
<feature type="compositionally biased region" description="Basic residues" evidence="2">
    <location>
        <begin position="630"/>
        <end position="640"/>
    </location>
</feature>
<feature type="compositionally biased region" description="Basic and acidic residues" evidence="2">
    <location>
        <begin position="650"/>
        <end position="664"/>
    </location>
</feature>
<feature type="compositionally biased region" description="Basic and acidic residues" evidence="2">
    <location>
        <begin position="674"/>
        <end position="692"/>
    </location>
</feature>
<feature type="compositionally biased region" description="Polar residues" evidence="2">
    <location>
        <begin position="720"/>
        <end position="748"/>
    </location>
</feature>
<feature type="compositionally biased region" description="Polar residues" evidence="2">
    <location>
        <begin position="756"/>
        <end position="773"/>
    </location>
</feature>
<feature type="compositionally biased region" description="Polar residues" evidence="2">
    <location>
        <begin position="792"/>
        <end position="805"/>
    </location>
</feature>
<feature type="compositionally biased region" description="Low complexity" evidence="2">
    <location>
        <begin position="812"/>
        <end position="826"/>
    </location>
</feature>
<feature type="compositionally biased region" description="Basic residues" evidence="2">
    <location>
        <begin position="842"/>
        <end position="855"/>
    </location>
</feature>
<feature type="modified residue" description="Phosphoserine" evidence="4">
    <location>
        <position position="95"/>
    </location>
</feature>
<feature type="modified residue" description="Phosphoserine" evidence="4">
    <location>
        <position position="97"/>
    </location>
</feature>
<feature type="modified residue" description="Phosphoserine" evidence="4">
    <location>
        <position position="98"/>
    </location>
</feature>
<feature type="modified residue" description="Phosphoserine" evidence="4">
    <location>
        <position position="137"/>
    </location>
</feature>
<feature type="modified residue" description="Phosphoserine" evidence="4">
    <location>
        <position position="138"/>
    </location>
</feature>
<feature type="modified residue" description="Phosphoserine" evidence="3">
    <location>
        <position position="179"/>
    </location>
</feature>
<accession>Q9VTU0</accession>
<comment type="similarity">
    <text evidence="5">Belongs to the KRI1 family.</text>
</comment>
<reference key="1">
    <citation type="journal article" date="2000" name="Science">
        <title>The genome sequence of Drosophila melanogaster.</title>
        <authorList>
            <person name="Adams M.D."/>
            <person name="Celniker S.E."/>
            <person name="Holt R.A."/>
            <person name="Evans C.A."/>
            <person name="Gocayne J.D."/>
            <person name="Amanatides P.G."/>
            <person name="Scherer S.E."/>
            <person name="Li P.W."/>
            <person name="Hoskins R.A."/>
            <person name="Galle R.F."/>
            <person name="George R.A."/>
            <person name="Lewis S.E."/>
            <person name="Richards S."/>
            <person name="Ashburner M."/>
            <person name="Henderson S.N."/>
            <person name="Sutton G.G."/>
            <person name="Wortman J.R."/>
            <person name="Yandell M.D."/>
            <person name="Zhang Q."/>
            <person name="Chen L.X."/>
            <person name="Brandon R.C."/>
            <person name="Rogers Y.-H.C."/>
            <person name="Blazej R.G."/>
            <person name="Champe M."/>
            <person name="Pfeiffer B.D."/>
            <person name="Wan K.H."/>
            <person name="Doyle C."/>
            <person name="Baxter E.G."/>
            <person name="Helt G."/>
            <person name="Nelson C.R."/>
            <person name="Miklos G.L.G."/>
            <person name="Abril J.F."/>
            <person name="Agbayani A."/>
            <person name="An H.-J."/>
            <person name="Andrews-Pfannkoch C."/>
            <person name="Baldwin D."/>
            <person name="Ballew R.M."/>
            <person name="Basu A."/>
            <person name="Baxendale J."/>
            <person name="Bayraktaroglu L."/>
            <person name="Beasley E.M."/>
            <person name="Beeson K.Y."/>
            <person name="Benos P.V."/>
            <person name="Berman B.P."/>
            <person name="Bhandari D."/>
            <person name="Bolshakov S."/>
            <person name="Borkova D."/>
            <person name="Botchan M.R."/>
            <person name="Bouck J."/>
            <person name="Brokstein P."/>
            <person name="Brottier P."/>
            <person name="Burtis K.C."/>
            <person name="Busam D.A."/>
            <person name="Butler H."/>
            <person name="Cadieu E."/>
            <person name="Center A."/>
            <person name="Chandra I."/>
            <person name="Cherry J.M."/>
            <person name="Cawley S."/>
            <person name="Dahlke C."/>
            <person name="Davenport L.B."/>
            <person name="Davies P."/>
            <person name="de Pablos B."/>
            <person name="Delcher A."/>
            <person name="Deng Z."/>
            <person name="Mays A.D."/>
            <person name="Dew I."/>
            <person name="Dietz S.M."/>
            <person name="Dodson K."/>
            <person name="Doup L.E."/>
            <person name="Downes M."/>
            <person name="Dugan-Rocha S."/>
            <person name="Dunkov B.C."/>
            <person name="Dunn P."/>
            <person name="Durbin K.J."/>
            <person name="Evangelista C.C."/>
            <person name="Ferraz C."/>
            <person name="Ferriera S."/>
            <person name="Fleischmann W."/>
            <person name="Fosler C."/>
            <person name="Gabrielian A.E."/>
            <person name="Garg N.S."/>
            <person name="Gelbart W.M."/>
            <person name="Glasser K."/>
            <person name="Glodek A."/>
            <person name="Gong F."/>
            <person name="Gorrell J.H."/>
            <person name="Gu Z."/>
            <person name="Guan P."/>
            <person name="Harris M."/>
            <person name="Harris N.L."/>
            <person name="Harvey D.A."/>
            <person name="Heiman T.J."/>
            <person name="Hernandez J.R."/>
            <person name="Houck J."/>
            <person name="Hostin D."/>
            <person name="Houston K.A."/>
            <person name="Howland T.J."/>
            <person name="Wei M.-H."/>
            <person name="Ibegwam C."/>
            <person name="Jalali M."/>
            <person name="Kalush F."/>
            <person name="Karpen G.H."/>
            <person name="Ke Z."/>
            <person name="Kennison J.A."/>
            <person name="Ketchum K.A."/>
            <person name="Kimmel B.E."/>
            <person name="Kodira C.D."/>
            <person name="Kraft C.L."/>
            <person name="Kravitz S."/>
            <person name="Kulp D."/>
            <person name="Lai Z."/>
            <person name="Lasko P."/>
            <person name="Lei Y."/>
            <person name="Levitsky A.A."/>
            <person name="Li J.H."/>
            <person name="Li Z."/>
            <person name="Liang Y."/>
            <person name="Lin X."/>
            <person name="Liu X."/>
            <person name="Mattei B."/>
            <person name="McIntosh T.C."/>
            <person name="McLeod M.P."/>
            <person name="McPherson D."/>
            <person name="Merkulov G."/>
            <person name="Milshina N.V."/>
            <person name="Mobarry C."/>
            <person name="Morris J."/>
            <person name="Moshrefi A."/>
            <person name="Mount S.M."/>
            <person name="Moy M."/>
            <person name="Murphy B."/>
            <person name="Murphy L."/>
            <person name="Muzny D.M."/>
            <person name="Nelson D.L."/>
            <person name="Nelson D.R."/>
            <person name="Nelson K.A."/>
            <person name="Nixon K."/>
            <person name="Nusskern D.R."/>
            <person name="Pacleb J.M."/>
            <person name="Palazzolo M."/>
            <person name="Pittman G.S."/>
            <person name="Pan S."/>
            <person name="Pollard J."/>
            <person name="Puri V."/>
            <person name="Reese M.G."/>
            <person name="Reinert K."/>
            <person name="Remington K."/>
            <person name="Saunders R.D.C."/>
            <person name="Scheeler F."/>
            <person name="Shen H."/>
            <person name="Shue B.C."/>
            <person name="Siden-Kiamos I."/>
            <person name="Simpson M."/>
            <person name="Skupski M.P."/>
            <person name="Smith T.J."/>
            <person name="Spier E."/>
            <person name="Spradling A.C."/>
            <person name="Stapleton M."/>
            <person name="Strong R."/>
            <person name="Sun E."/>
            <person name="Svirskas R."/>
            <person name="Tector C."/>
            <person name="Turner R."/>
            <person name="Venter E."/>
            <person name="Wang A.H."/>
            <person name="Wang X."/>
            <person name="Wang Z.-Y."/>
            <person name="Wassarman D.A."/>
            <person name="Weinstock G.M."/>
            <person name="Weissenbach J."/>
            <person name="Williams S.M."/>
            <person name="Woodage T."/>
            <person name="Worley K.C."/>
            <person name="Wu D."/>
            <person name="Yang S."/>
            <person name="Yao Q.A."/>
            <person name="Ye J."/>
            <person name="Yeh R.-F."/>
            <person name="Zaveri J.S."/>
            <person name="Zhan M."/>
            <person name="Zhang G."/>
            <person name="Zhao Q."/>
            <person name="Zheng L."/>
            <person name="Zheng X.H."/>
            <person name="Zhong F.N."/>
            <person name="Zhong W."/>
            <person name="Zhou X."/>
            <person name="Zhu S.C."/>
            <person name="Zhu X."/>
            <person name="Smith H.O."/>
            <person name="Gibbs R.A."/>
            <person name="Myers E.W."/>
            <person name="Rubin G.M."/>
            <person name="Venter J.C."/>
        </authorList>
    </citation>
    <scope>NUCLEOTIDE SEQUENCE [LARGE SCALE GENOMIC DNA]</scope>
    <source>
        <strain>Berkeley</strain>
    </source>
</reference>
<reference key="2">
    <citation type="journal article" date="2002" name="Genome Biol.">
        <title>Annotation of the Drosophila melanogaster euchromatic genome: a systematic review.</title>
        <authorList>
            <person name="Misra S."/>
            <person name="Crosby M.A."/>
            <person name="Mungall C.J."/>
            <person name="Matthews B.B."/>
            <person name="Campbell K.S."/>
            <person name="Hradecky P."/>
            <person name="Huang Y."/>
            <person name="Kaminker J.S."/>
            <person name="Millburn G.H."/>
            <person name="Prochnik S.E."/>
            <person name="Smith C.D."/>
            <person name="Tupy J.L."/>
            <person name="Whitfield E.J."/>
            <person name="Bayraktaroglu L."/>
            <person name="Berman B.P."/>
            <person name="Bettencourt B.R."/>
            <person name="Celniker S.E."/>
            <person name="de Grey A.D.N.J."/>
            <person name="Drysdale R.A."/>
            <person name="Harris N.L."/>
            <person name="Richter J."/>
            <person name="Russo S."/>
            <person name="Schroeder A.J."/>
            <person name="Shu S.Q."/>
            <person name="Stapleton M."/>
            <person name="Yamada C."/>
            <person name="Ashburner M."/>
            <person name="Gelbart W.M."/>
            <person name="Rubin G.M."/>
            <person name="Lewis S.E."/>
        </authorList>
    </citation>
    <scope>GENOME REANNOTATION</scope>
    <source>
        <strain>Berkeley</strain>
    </source>
</reference>
<reference key="3">
    <citation type="journal article" date="2002" name="Genome Biol.">
        <title>A Drosophila full-length cDNA resource.</title>
        <authorList>
            <person name="Stapleton M."/>
            <person name="Carlson J.W."/>
            <person name="Brokstein P."/>
            <person name="Yu C."/>
            <person name="Champe M."/>
            <person name="George R.A."/>
            <person name="Guarin H."/>
            <person name="Kronmiller B."/>
            <person name="Pacleb J.M."/>
            <person name="Park S."/>
            <person name="Wan K.H."/>
            <person name="Rubin G.M."/>
            <person name="Celniker S.E."/>
        </authorList>
    </citation>
    <scope>NUCLEOTIDE SEQUENCE [LARGE SCALE MRNA]</scope>
    <source>
        <strain>Berkeley</strain>
        <tissue>Embryo</tissue>
    </source>
</reference>
<reference key="4">
    <citation type="journal article" date="2007" name="Mol. Biosyst.">
        <title>An integrated chemical, mass spectrometric and computational strategy for (quantitative) phosphoproteomics: application to Drosophila melanogaster Kc167 cells.</title>
        <authorList>
            <person name="Bodenmiller B."/>
            <person name="Mueller L.N."/>
            <person name="Pedrioli P.G.A."/>
            <person name="Pflieger D."/>
            <person name="Juenger M.A."/>
            <person name="Eng J.K."/>
            <person name="Aebersold R."/>
            <person name="Tao W.A."/>
        </authorList>
    </citation>
    <scope>PHOSPHORYLATION [LARGE SCALE ANALYSIS] AT SER-179</scope>
    <scope>IDENTIFICATION BY MASS SPECTROMETRY</scope>
</reference>
<reference key="5">
    <citation type="journal article" date="2008" name="J. Proteome Res.">
        <title>Phosphoproteome analysis of Drosophila melanogaster embryos.</title>
        <authorList>
            <person name="Zhai B."/>
            <person name="Villen J."/>
            <person name="Beausoleil S.A."/>
            <person name="Mintseris J."/>
            <person name="Gygi S.P."/>
        </authorList>
    </citation>
    <scope>PHOSPHORYLATION [LARGE SCALE ANALYSIS] AT SER-95; SER-97; SER-98; SER-137 AND SER-138</scope>
    <scope>IDENTIFICATION BY MASS SPECTROMETRY</scope>
    <source>
        <tissue>Embryo</tissue>
    </source>
</reference>
<dbReference type="EMBL" id="AE014296">
    <property type="protein sequence ID" value="AAF49956.1"/>
    <property type="molecule type" value="Genomic_DNA"/>
</dbReference>
<dbReference type="EMBL" id="AY061053">
    <property type="protein sequence ID" value="AAL28601.1"/>
    <property type="molecule type" value="mRNA"/>
</dbReference>
<dbReference type="RefSeq" id="NP_648550.1">
    <property type="nucleotide sequence ID" value="NM_140293.3"/>
</dbReference>
<dbReference type="SMR" id="Q9VTU0"/>
<dbReference type="BioGRID" id="64737">
    <property type="interactions" value="13"/>
</dbReference>
<dbReference type="FunCoup" id="Q9VTU0">
    <property type="interactions" value="576"/>
</dbReference>
<dbReference type="IntAct" id="Q9VTU0">
    <property type="interactions" value="15"/>
</dbReference>
<dbReference type="STRING" id="7227.FBpp0075756"/>
<dbReference type="GlyGen" id="Q9VTU0">
    <property type="glycosylation" value="1 site"/>
</dbReference>
<dbReference type="iPTMnet" id="Q9VTU0"/>
<dbReference type="PaxDb" id="7227-FBpp0075756"/>
<dbReference type="DNASU" id="39382"/>
<dbReference type="EnsemblMetazoa" id="FBtr0076024">
    <property type="protein sequence ID" value="FBpp0075756"/>
    <property type="gene ID" value="FBgn0036254"/>
</dbReference>
<dbReference type="GeneID" id="39382"/>
<dbReference type="KEGG" id="dme:Dmel_CG5645"/>
<dbReference type="UCSC" id="CG5645-RA">
    <property type="organism name" value="d. melanogaster"/>
</dbReference>
<dbReference type="AGR" id="FB:FBgn0036254"/>
<dbReference type="FlyBase" id="FBgn0036254">
    <property type="gene designation" value="CG5645"/>
</dbReference>
<dbReference type="VEuPathDB" id="VectorBase:FBgn0036254"/>
<dbReference type="eggNOG" id="KOG2409">
    <property type="taxonomic scope" value="Eukaryota"/>
</dbReference>
<dbReference type="GeneTree" id="ENSGT00390000005605"/>
<dbReference type="HOGENOM" id="CLU_009647_0_0_1"/>
<dbReference type="InParanoid" id="Q9VTU0"/>
<dbReference type="OMA" id="WDNYDPR"/>
<dbReference type="OrthoDB" id="10252032at2759"/>
<dbReference type="PhylomeDB" id="Q9VTU0"/>
<dbReference type="BioGRID-ORCS" id="39382">
    <property type="hits" value="0 hits in 1 CRISPR screen"/>
</dbReference>
<dbReference type="GenomeRNAi" id="39382"/>
<dbReference type="PRO" id="PR:Q9VTU0"/>
<dbReference type="Proteomes" id="UP000000803">
    <property type="component" value="Chromosome 3L"/>
</dbReference>
<dbReference type="Bgee" id="FBgn0036254">
    <property type="expression patterns" value="Expressed in posterior terminal follicle cell in ovary and 72 other cell types or tissues"/>
</dbReference>
<dbReference type="GO" id="GO:0030686">
    <property type="term" value="C:90S preribosome"/>
    <property type="evidence" value="ECO:0000318"/>
    <property type="project" value="GO_Central"/>
</dbReference>
<dbReference type="GO" id="GO:0005730">
    <property type="term" value="C:nucleolus"/>
    <property type="evidence" value="ECO:0000318"/>
    <property type="project" value="GO_Central"/>
</dbReference>
<dbReference type="GO" id="GO:0000447">
    <property type="term" value="P:endonucleolytic cleavage in ITS1 to separate SSU-rRNA from 5.8S rRNA and LSU-rRNA from tricistronic rRNA transcript (SSU-rRNA, 5.8S rRNA, LSU-rRNA)"/>
    <property type="evidence" value="ECO:0000318"/>
    <property type="project" value="GO_Central"/>
</dbReference>
<dbReference type="InterPro" id="IPR018034">
    <property type="entry name" value="Kri1"/>
</dbReference>
<dbReference type="InterPro" id="IPR024626">
    <property type="entry name" value="Kri1-like_C"/>
</dbReference>
<dbReference type="PANTHER" id="PTHR14490:SF5">
    <property type="entry name" value="PROTEIN KRI1 HOMOLOG"/>
    <property type="match status" value="1"/>
</dbReference>
<dbReference type="PANTHER" id="PTHR14490">
    <property type="entry name" value="ZINC FINGER, ZZ TYPE"/>
    <property type="match status" value="1"/>
</dbReference>
<dbReference type="Pfam" id="PF05178">
    <property type="entry name" value="Kri1"/>
    <property type="match status" value="1"/>
</dbReference>
<dbReference type="Pfam" id="PF12936">
    <property type="entry name" value="Kri1_C"/>
    <property type="match status" value="1"/>
</dbReference>
<protein>
    <recommendedName>
        <fullName>Protein KRI1 homolog</fullName>
    </recommendedName>
</protein>
<keyword id="KW-0175">Coiled coil</keyword>
<keyword id="KW-0597">Phosphoprotein</keyword>
<keyword id="KW-1185">Reference proteome</keyword>
<sequence>MNNNLFEGSDDDGEDLQLSTNKDYAKTYNILRKKELLQKYKDRGLDVSESEFDSDSSSSEEDEVDPKFDQDFFKTLSSLKSKDPCIYDKGTKFFSESSGDEDDKDGEAPKKKKKAKPVTLKDYERKVILEHNGKFESSDEEQQEKEHEELQRAQSPSAVEEERRLKAEFRKVMNKEDDSEDEEFGGIFKKRSKTKEQTAAEEADFAKWLAGKQAEIQETDKKQLEPLKQYWSSNKLTQGESFLRDYILNKGYANTDESAIPTYDEIVGEAAPLSEDEQELEKQAEFEHKYNFRFEEPDADFIKRYPRTIEQSLRRTDDKRKEKRKELKERKDQEKQQKMKELELVKEMKRKEIDEKIRKLKAVTGNDELGFRDEELEEDFDPAAHDRRMQELFDDEYYNVDEGEEKPECPSDIDELVLEDWDNYDPRQHANGGGEDYEGHCEDDDFNMDCDYDPSTAKEQLQQELIENTRGRKGRKGRRNRFMEMIQAEKPAFNPEDEKTYSEYIDEYYQMDCEDIIGDQPCRFKYVETTPNDFGLTIEEILLAKNKELNQWASLKKAVQNRPEHVEKKEQRLYKMKAKNEDLKRKIFKSLYGEGSDDEEQPAEEKPEVTPAEATAPAENGQVSTEGLSKSKRKRLKRKAAAAAASAPKVLKEESDSKDPKEADGSTEDVQAESSKKKVDTPSKKGKDDANQETKNSPQSTEKTKNNNALKNNKKEPKNVQNGFQKPQNQANKSAKTKSNQPFKTTESAPAKAEKSNGNNPFNKPQSKSQQRQELPPIHKNQGGNKKGPRNANGTNPFKKSNQKPSAPFPAKKTNNFKAKNKQNNNSGITDDRLKAYGINPRKFHKREKYGKKDN</sequence>
<gene>
    <name type="ORF">CG5645</name>
</gene>